<evidence type="ECO:0000255" key="1">
    <source>
        <dbReference type="HAMAP-Rule" id="MF_01039"/>
    </source>
</evidence>
<sequence length="250" mass="28556">MAVTKLVLVRHGESQWNKENRFTGWYDVDLSEKGVSEAKAAGKLLKEEGYSFDFAYTSVLKRAIHTLWNVLDELDQAWLPVEKSWKLNERHYGALQGLNKAETAEKYGDEQVKQWRRGFAVTPPELTKDDERYPGHDPRYAKLSEKELPLTESLALTIDRVIPYWNETILPRMKSGERVIIAAHGNSLRALVKYLDNMSEEEILELNIPTGVPLVYEFDENFKPLKRYYLGNADEIAAKAAAVANQGKAK</sequence>
<gene>
    <name evidence="1" type="primary">gpmA</name>
    <name type="ordered locus">ECH74115_0857</name>
</gene>
<comment type="function">
    <text evidence="1">Catalyzes the interconversion of 2-phosphoglycerate and 3-phosphoglycerate.</text>
</comment>
<comment type="catalytic activity">
    <reaction evidence="1">
        <text>(2R)-2-phosphoglycerate = (2R)-3-phosphoglycerate</text>
        <dbReference type="Rhea" id="RHEA:15901"/>
        <dbReference type="ChEBI" id="CHEBI:58272"/>
        <dbReference type="ChEBI" id="CHEBI:58289"/>
        <dbReference type="EC" id="5.4.2.11"/>
    </reaction>
</comment>
<comment type="pathway">
    <text evidence="1">Carbohydrate degradation; glycolysis; pyruvate from D-glyceraldehyde 3-phosphate: step 3/5.</text>
</comment>
<comment type="subunit">
    <text evidence="1">Homodimer.</text>
</comment>
<comment type="similarity">
    <text evidence="1">Belongs to the phosphoglycerate mutase family. BPG-dependent PGAM subfamily.</text>
</comment>
<reference key="1">
    <citation type="journal article" date="2011" name="Proc. Natl. Acad. Sci. U.S.A.">
        <title>Genomic anatomy of Escherichia coli O157:H7 outbreaks.</title>
        <authorList>
            <person name="Eppinger M."/>
            <person name="Mammel M.K."/>
            <person name="Leclerc J.E."/>
            <person name="Ravel J."/>
            <person name="Cebula T.A."/>
        </authorList>
    </citation>
    <scope>NUCLEOTIDE SEQUENCE [LARGE SCALE GENOMIC DNA]</scope>
    <source>
        <strain>EC4115 / EHEC</strain>
    </source>
</reference>
<organism>
    <name type="scientific">Escherichia coli O157:H7 (strain EC4115 / EHEC)</name>
    <dbReference type="NCBI Taxonomy" id="444450"/>
    <lineage>
        <taxon>Bacteria</taxon>
        <taxon>Pseudomonadati</taxon>
        <taxon>Pseudomonadota</taxon>
        <taxon>Gammaproteobacteria</taxon>
        <taxon>Enterobacterales</taxon>
        <taxon>Enterobacteriaceae</taxon>
        <taxon>Escherichia</taxon>
    </lineage>
</organism>
<proteinExistence type="inferred from homology"/>
<accession>B5YRF2</accession>
<dbReference type="EC" id="5.4.2.11" evidence="1"/>
<dbReference type="EMBL" id="CP001164">
    <property type="protein sequence ID" value="ACI39667.1"/>
    <property type="molecule type" value="Genomic_DNA"/>
</dbReference>
<dbReference type="RefSeq" id="WP_001295305.1">
    <property type="nucleotide sequence ID" value="NC_011353.1"/>
</dbReference>
<dbReference type="SMR" id="B5YRF2"/>
<dbReference type="GeneID" id="93776726"/>
<dbReference type="KEGG" id="ecf:ECH74115_0857"/>
<dbReference type="HOGENOM" id="CLU_033323_1_1_6"/>
<dbReference type="UniPathway" id="UPA00109">
    <property type="reaction ID" value="UER00186"/>
</dbReference>
<dbReference type="GO" id="GO:0004619">
    <property type="term" value="F:phosphoglycerate mutase activity"/>
    <property type="evidence" value="ECO:0007669"/>
    <property type="project" value="UniProtKB-EC"/>
</dbReference>
<dbReference type="GO" id="GO:0006094">
    <property type="term" value="P:gluconeogenesis"/>
    <property type="evidence" value="ECO:0007669"/>
    <property type="project" value="UniProtKB-UniRule"/>
</dbReference>
<dbReference type="GO" id="GO:0006096">
    <property type="term" value="P:glycolytic process"/>
    <property type="evidence" value="ECO:0007669"/>
    <property type="project" value="UniProtKB-UniRule"/>
</dbReference>
<dbReference type="CDD" id="cd07067">
    <property type="entry name" value="HP_PGM_like"/>
    <property type="match status" value="1"/>
</dbReference>
<dbReference type="FunFam" id="3.40.50.1240:FF:000003">
    <property type="entry name" value="2,3-bisphosphoglycerate-dependent phosphoglycerate mutase"/>
    <property type="match status" value="1"/>
</dbReference>
<dbReference type="Gene3D" id="3.40.50.1240">
    <property type="entry name" value="Phosphoglycerate mutase-like"/>
    <property type="match status" value="1"/>
</dbReference>
<dbReference type="HAMAP" id="MF_01039">
    <property type="entry name" value="PGAM_GpmA"/>
    <property type="match status" value="1"/>
</dbReference>
<dbReference type="InterPro" id="IPR013078">
    <property type="entry name" value="His_Pase_superF_clade-1"/>
</dbReference>
<dbReference type="InterPro" id="IPR029033">
    <property type="entry name" value="His_PPase_superfam"/>
</dbReference>
<dbReference type="InterPro" id="IPR001345">
    <property type="entry name" value="PG/BPGM_mutase_AS"/>
</dbReference>
<dbReference type="InterPro" id="IPR005952">
    <property type="entry name" value="Phosphogly_mut1"/>
</dbReference>
<dbReference type="NCBIfam" id="TIGR01258">
    <property type="entry name" value="pgm_1"/>
    <property type="match status" value="1"/>
</dbReference>
<dbReference type="NCBIfam" id="NF010713">
    <property type="entry name" value="PRK14115.1"/>
    <property type="match status" value="1"/>
</dbReference>
<dbReference type="PANTHER" id="PTHR11931">
    <property type="entry name" value="PHOSPHOGLYCERATE MUTASE"/>
    <property type="match status" value="1"/>
</dbReference>
<dbReference type="Pfam" id="PF00300">
    <property type="entry name" value="His_Phos_1"/>
    <property type="match status" value="1"/>
</dbReference>
<dbReference type="PIRSF" id="PIRSF000709">
    <property type="entry name" value="6PFK_2-Ptase"/>
    <property type="match status" value="1"/>
</dbReference>
<dbReference type="SMART" id="SM00855">
    <property type="entry name" value="PGAM"/>
    <property type="match status" value="1"/>
</dbReference>
<dbReference type="SUPFAM" id="SSF53254">
    <property type="entry name" value="Phosphoglycerate mutase-like"/>
    <property type="match status" value="1"/>
</dbReference>
<dbReference type="PROSITE" id="PS00175">
    <property type="entry name" value="PG_MUTASE"/>
    <property type="match status" value="1"/>
</dbReference>
<protein>
    <recommendedName>
        <fullName evidence="1">2,3-bisphosphoglycerate-dependent phosphoglycerate mutase</fullName>
        <shortName evidence="1">BPG-dependent PGAM</shortName>
        <shortName evidence="1">PGAM</shortName>
        <shortName evidence="1">Phosphoglyceromutase</shortName>
        <shortName evidence="1">dPGM</shortName>
        <ecNumber evidence="1">5.4.2.11</ecNumber>
    </recommendedName>
</protein>
<keyword id="KW-0312">Gluconeogenesis</keyword>
<keyword id="KW-0324">Glycolysis</keyword>
<keyword id="KW-0413">Isomerase</keyword>
<feature type="chain" id="PRO_1000135944" description="2,3-bisphosphoglycerate-dependent phosphoglycerate mutase">
    <location>
        <begin position="1"/>
        <end position="250"/>
    </location>
</feature>
<feature type="active site" description="Tele-phosphohistidine intermediate" evidence="1">
    <location>
        <position position="11"/>
    </location>
</feature>
<feature type="active site" description="Proton donor/acceptor" evidence="1">
    <location>
        <position position="89"/>
    </location>
</feature>
<feature type="binding site" evidence="1">
    <location>
        <begin position="10"/>
        <end position="17"/>
    </location>
    <ligand>
        <name>substrate</name>
    </ligand>
</feature>
<feature type="binding site" evidence="1">
    <location>
        <begin position="23"/>
        <end position="24"/>
    </location>
    <ligand>
        <name>substrate</name>
    </ligand>
</feature>
<feature type="binding site" evidence="1">
    <location>
        <position position="62"/>
    </location>
    <ligand>
        <name>substrate</name>
    </ligand>
</feature>
<feature type="binding site" evidence="1">
    <location>
        <begin position="89"/>
        <end position="92"/>
    </location>
    <ligand>
        <name>substrate</name>
    </ligand>
</feature>
<feature type="binding site" evidence="1">
    <location>
        <position position="100"/>
    </location>
    <ligand>
        <name>substrate</name>
    </ligand>
</feature>
<feature type="binding site" evidence="1">
    <location>
        <begin position="116"/>
        <end position="117"/>
    </location>
    <ligand>
        <name>substrate</name>
    </ligand>
</feature>
<feature type="binding site" evidence="1">
    <location>
        <begin position="185"/>
        <end position="186"/>
    </location>
    <ligand>
        <name>substrate</name>
    </ligand>
</feature>
<feature type="site" description="Transition state stabilizer" evidence="1">
    <location>
        <position position="184"/>
    </location>
</feature>
<name>GPMA_ECO5E</name>